<keyword id="KW-0030">Aminoacyl-tRNA synthetase</keyword>
<keyword id="KW-0067">ATP-binding</keyword>
<keyword id="KW-0963">Cytoplasm</keyword>
<keyword id="KW-0436">Ligase</keyword>
<keyword id="KW-0547">Nucleotide-binding</keyword>
<keyword id="KW-0648">Protein biosynthesis</keyword>
<keyword id="KW-1185">Reference proteome</keyword>
<reference key="1">
    <citation type="journal article" date="2002" name="Nucleic Acids Res.">
        <title>Genome sequence of Oceanobacillus iheyensis isolated from the Iheya Ridge and its unexpected adaptive capabilities to extreme environments.</title>
        <authorList>
            <person name="Takami H."/>
            <person name="Takaki Y."/>
            <person name="Uchiyama I."/>
        </authorList>
    </citation>
    <scope>NUCLEOTIDE SEQUENCE [LARGE SCALE GENOMIC DNA]</scope>
    <source>
        <strain>DSM 14371 / CIP 107618 / JCM 11309 / KCTC 3954 / HTE831</strain>
    </source>
</reference>
<organism>
    <name type="scientific">Oceanobacillus iheyensis (strain DSM 14371 / CIP 107618 / JCM 11309 / KCTC 3954 / HTE831)</name>
    <dbReference type="NCBI Taxonomy" id="221109"/>
    <lineage>
        <taxon>Bacteria</taxon>
        <taxon>Bacillati</taxon>
        <taxon>Bacillota</taxon>
        <taxon>Bacilli</taxon>
        <taxon>Bacillales</taxon>
        <taxon>Bacillaceae</taxon>
        <taxon>Oceanobacillus</taxon>
    </lineage>
</organism>
<protein>
    <recommendedName>
        <fullName evidence="1">Glycine--tRNA ligase alpha subunit</fullName>
        <ecNumber evidence="1">6.1.1.14</ecNumber>
    </recommendedName>
    <alternativeName>
        <fullName evidence="1">Glycyl-tRNA synthetase alpha subunit</fullName>
        <shortName evidence="1">GlyRS</shortName>
    </alternativeName>
</protein>
<comment type="catalytic activity">
    <reaction evidence="1">
        <text>tRNA(Gly) + glycine + ATP = glycyl-tRNA(Gly) + AMP + diphosphate</text>
        <dbReference type="Rhea" id="RHEA:16013"/>
        <dbReference type="Rhea" id="RHEA-COMP:9664"/>
        <dbReference type="Rhea" id="RHEA-COMP:9683"/>
        <dbReference type="ChEBI" id="CHEBI:30616"/>
        <dbReference type="ChEBI" id="CHEBI:33019"/>
        <dbReference type="ChEBI" id="CHEBI:57305"/>
        <dbReference type="ChEBI" id="CHEBI:78442"/>
        <dbReference type="ChEBI" id="CHEBI:78522"/>
        <dbReference type="ChEBI" id="CHEBI:456215"/>
        <dbReference type="EC" id="6.1.1.14"/>
    </reaction>
</comment>
<comment type="subunit">
    <text evidence="1">Tetramer of two alpha and two beta subunits.</text>
</comment>
<comment type="subcellular location">
    <subcellularLocation>
        <location evidence="1">Cytoplasm</location>
    </subcellularLocation>
</comment>
<comment type="similarity">
    <text evidence="1">Belongs to the class-II aminoacyl-tRNA synthetase family.</text>
</comment>
<accession>Q8EPY1</accession>
<feature type="chain" id="PRO_0000072852" description="Glycine--tRNA ligase alpha subunit">
    <location>
        <begin position="1"/>
        <end position="293"/>
    </location>
</feature>
<gene>
    <name evidence="1" type="primary">glyQ</name>
    <name type="ordered locus">OB1949</name>
</gene>
<sequence>MNIQEMILTLQNHWSEHNCILMQAYDTEKGAGTMSPMTLLRSLGPEPWNVAYVEPSRRPDDGRYGENPNRLYQHHQFQVIMKPSPDNIQELYLESLKKLGINPLEHDIRFVEDNWENPTLGAAGLGWEVWLDGMEITQFTYFQQIGGLEANPVTVELTYGIERLASYIQDKENVFDLEWNNGVTIRDIFYQPEYEHSTYTFKESNTDMLFDLFSMYEQEAKQTMEKGLVFPAYDYVLKCSHTFNLLDAKGVISVTERTGYIARIRNLARSISKIYVSEREKLGFPMLQEKGAK</sequence>
<evidence type="ECO:0000255" key="1">
    <source>
        <dbReference type="HAMAP-Rule" id="MF_00254"/>
    </source>
</evidence>
<name>SYGA_OCEIH</name>
<proteinExistence type="inferred from homology"/>
<dbReference type="EC" id="6.1.1.14" evidence="1"/>
<dbReference type="EMBL" id="BA000028">
    <property type="protein sequence ID" value="BAC13905.1"/>
    <property type="molecule type" value="Genomic_DNA"/>
</dbReference>
<dbReference type="RefSeq" id="WP_011066346.1">
    <property type="nucleotide sequence ID" value="NC_004193.1"/>
</dbReference>
<dbReference type="SMR" id="Q8EPY1"/>
<dbReference type="STRING" id="221109.gene:10734195"/>
<dbReference type="KEGG" id="oih:OB1949"/>
<dbReference type="eggNOG" id="COG0752">
    <property type="taxonomic scope" value="Bacteria"/>
</dbReference>
<dbReference type="HOGENOM" id="CLU_057066_1_0_9"/>
<dbReference type="OrthoDB" id="9802183at2"/>
<dbReference type="PhylomeDB" id="Q8EPY1"/>
<dbReference type="Proteomes" id="UP000000822">
    <property type="component" value="Chromosome"/>
</dbReference>
<dbReference type="GO" id="GO:0005829">
    <property type="term" value="C:cytosol"/>
    <property type="evidence" value="ECO:0007669"/>
    <property type="project" value="TreeGrafter"/>
</dbReference>
<dbReference type="GO" id="GO:0005524">
    <property type="term" value="F:ATP binding"/>
    <property type="evidence" value="ECO:0007669"/>
    <property type="project" value="UniProtKB-UniRule"/>
</dbReference>
<dbReference type="GO" id="GO:0140096">
    <property type="term" value="F:catalytic activity, acting on a protein"/>
    <property type="evidence" value="ECO:0007669"/>
    <property type="project" value="UniProtKB-ARBA"/>
</dbReference>
<dbReference type="GO" id="GO:0004820">
    <property type="term" value="F:glycine-tRNA ligase activity"/>
    <property type="evidence" value="ECO:0007669"/>
    <property type="project" value="UniProtKB-UniRule"/>
</dbReference>
<dbReference type="GO" id="GO:0016740">
    <property type="term" value="F:transferase activity"/>
    <property type="evidence" value="ECO:0007669"/>
    <property type="project" value="UniProtKB-ARBA"/>
</dbReference>
<dbReference type="GO" id="GO:0006426">
    <property type="term" value="P:glycyl-tRNA aminoacylation"/>
    <property type="evidence" value="ECO:0007669"/>
    <property type="project" value="UniProtKB-UniRule"/>
</dbReference>
<dbReference type="CDD" id="cd00733">
    <property type="entry name" value="GlyRS_alpha_core"/>
    <property type="match status" value="1"/>
</dbReference>
<dbReference type="FunFam" id="3.30.930.10:FF:000006">
    <property type="entry name" value="Glycine--tRNA ligase alpha subunit"/>
    <property type="match status" value="1"/>
</dbReference>
<dbReference type="Gene3D" id="3.30.930.10">
    <property type="entry name" value="Bira Bifunctional Protein, Domain 2"/>
    <property type="match status" value="1"/>
</dbReference>
<dbReference type="Gene3D" id="1.20.58.180">
    <property type="entry name" value="Class II aaRS and biotin synthetases, domain 2"/>
    <property type="match status" value="1"/>
</dbReference>
<dbReference type="HAMAP" id="MF_00254">
    <property type="entry name" value="Gly_tRNA_synth_alpha"/>
    <property type="match status" value="1"/>
</dbReference>
<dbReference type="InterPro" id="IPR045864">
    <property type="entry name" value="aa-tRNA-synth_II/BPL/LPL"/>
</dbReference>
<dbReference type="InterPro" id="IPR006194">
    <property type="entry name" value="Gly-tRNA-synth_heterodimer"/>
</dbReference>
<dbReference type="InterPro" id="IPR002310">
    <property type="entry name" value="Gly-tRNA_ligase_asu"/>
</dbReference>
<dbReference type="NCBIfam" id="TIGR00388">
    <property type="entry name" value="glyQ"/>
    <property type="match status" value="1"/>
</dbReference>
<dbReference type="NCBIfam" id="NF006827">
    <property type="entry name" value="PRK09348.1"/>
    <property type="match status" value="1"/>
</dbReference>
<dbReference type="PANTHER" id="PTHR30075:SF2">
    <property type="entry name" value="GLYCINE--TRNA LIGASE, CHLOROPLASTIC_MITOCHONDRIAL 2"/>
    <property type="match status" value="1"/>
</dbReference>
<dbReference type="PANTHER" id="PTHR30075">
    <property type="entry name" value="GLYCYL-TRNA SYNTHETASE"/>
    <property type="match status" value="1"/>
</dbReference>
<dbReference type="Pfam" id="PF02091">
    <property type="entry name" value="tRNA-synt_2e"/>
    <property type="match status" value="1"/>
</dbReference>
<dbReference type="PRINTS" id="PR01044">
    <property type="entry name" value="TRNASYNTHGA"/>
</dbReference>
<dbReference type="SUPFAM" id="SSF55681">
    <property type="entry name" value="Class II aaRS and biotin synthetases"/>
    <property type="match status" value="1"/>
</dbReference>
<dbReference type="PROSITE" id="PS50861">
    <property type="entry name" value="AA_TRNA_LIGASE_II_GLYAB"/>
    <property type="match status" value="1"/>
</dbReference>